<feature type="initiator methionine" description="Removed" evidence="19">
    <location>
        <position position="1"/>
    </location>
</feature>
<feature type="chain" id="PRO_0000298763" description="MLX-interacting protein">
    <location>
        <begin position="2"/>
        <end position="919"/>
    </location>
</feature>
<feature type="domain" description="bHLH" evidence="2">
    <location>
        <begin position="719"/>
        <end position="769"/>
    </location>
</feature>
<feature type="region of interest" description="Disordered" evidence="3">
    <location>
        <begin position="1"/>
        <end position="72"/>
    </location>
</feature>
<feature type="region of interest" description="Required for cytoplasmic localization" evidence="5">
    <location>
        <begin position="73"/>
        <end position="327"/>
    </location>
</feature>
<feature type="region of interest" description="Transactivation domain" evidence="5">
    <location>
        <begin position="322"/>
        <end position="445"/>
    </location>
</feature>
<feature type="region of interest" description="Disordered" evidence="3">
    <location>
        <begin position="542"/>
        <end position="562"/>
    </location>
</feature>
<feature type="region of interest" description="Disordered" evidence="3">
    <location>
        <begin position="633"/>
        <end position="712"/>
    </location>
</feature>
<feature type="region of interest" description="Leucine-zipper">
    <location>
        <begin position="769"/>
        <end position="790"/>
    </location>
</feature>
<feature type="region of interest" description="Mediates heterotypic interactions between MLXIP and MLX and is required for cytoplasmic localization" evidence="5">
    <location>
        <begin position="832"/>
        <end position="881"/>
    </location>
</feature>
<feature type="compositionally biased region" description="Acidic residues" evidence="3">
    <location>
        <begin position="27"/>
        <end position="37"/>
    </location>
</feature>
<feature type="compositionally biased region" description="Low complexity" evidence="3">
    <location>
        <begin position="44"/>
        <end position="56"/>
    </location>
</feature>
<feature type="compositionally biased region" description="Polar residues" evidence="3">
    <location>
        <begin position="670"/>
        <end position="685"/>
    </location>
</feature>
<feature type="compositionally biased region" description="Low complexity" evidence="3">
    <location>
        <begin position="686"/>
        <end position="706"/>
    </location>
</feature>
<feature type="modified residue" description="N-acetylalanine" evidence="19">
    <location>
        <position position="2"/>
    </location>
</feature>
<feature type="modified residue" description="Phosphoserine" evidence="20">
    <location>
        <position position="9"/>
    </location>
</feature>
<feature type="modified residue" description="Phosphoserine" evidence="18">
    <location>
        <position position="27"/>
    </location>
</feature>
<feature type="modified residue" description="Phosphoserine" evidence="18">
    <location>
        <position position="33"/>
    </location>
</feature>
<feature type="modified residue" description="Phosphoserine" evidence="1">
    <location>
        <position position="39"/>
    </location>
</feature>
<feature type="modified residue" description="Phosphoserine" evidence="20">
    <location>
        <position position="669"/>
    </location>
</feature>
<feature type="splice variant" id="VSP_052499" description="In isoform 2, isoform 4 and isoform 5." evidence="9 10 11">
    <location>
        <begin position="1"/>
        <end position="393"/>
    </location>
</feature>
<feature type="splice variant" id="VSP_052500" description="In isoform 5." evidence="10">
    <location>
        <begin position="426"/>
        <end position="443"/>
    </location>
</feature>
<feature type="splice variant" id="VSP_052501" description="In isoform 3 and isoform 5." evidence="10">
    <original>AAFSGQPQAVIMTSGPLKREGMLASTVSQSNVVIAPAAIARAPGVPEFHSS</original>
    <variation>GEPGGETQCGAPPDPEGCFPIPKAFKLVTTTTTLVCTCMRTHIHLNETKVS</variation>
    <location>
        <begin position="578"/>
        <end position="628"/>
    </location>
</feature>
<feature type="splice variant" id="VSP_052502" description="In isoform 3 and isoform 5." evidence="10">
    <location>
        <begin position="629"/>
        <end position="919"/>
    </location>
</feature>
<feature type="splice variant" id="VSP_052503" description="In isoform 4." evidence="11">
    <original>QQE</original>
    <variation>LLS</variation>
    <location>
        <begin position="770"/>
        <end position="772"/>
    </location>
</feature>
<feature type="splice variant" id="VSP_052504" description="In isoform 4." evidence="11">
    <location>
        <begin position="773"/>
        <end position="919"/>
    </location>
</feature>
<feature type="sequence variant" id="VAR_059344" description="In dbSNP:rs7978353." evidence="6 8">
    <original>E</original>
    <variation>G</variation>
    <location>
        <position position="396"/>
    </location>
</feature>
<feature type="sequence variant" id="VAR_059345" description="In dbSNP:rs34702867.">
    <original>V</original>
    <variation>L</variation>
    <location>
        <position position="539"/>
    </location>
</feature>
<evidence type="ECO:0000250" key="1">
    <source>
        <dbReference type="UniProtKB" id="Q2VPU4"/>
    </source>
</evidence>
<evidence type="ECO:0000255" key="2">
    <source>
        <dbReference type="PROSITE-ProRule" id="PRU00981"/>
    </source>
</evidence>
<evidence type="ECO:0000256" key="3">
    <source>
        <dbReference type="SAM" id="MobiDB-lite"/>
    </source>
</evidence>
<evidence type="ECO:0000269" key="4">
    <source>
    </source>
</evidence>
<evidence type="ECO:0000269" key="5">
    <source>
    </source>
</evidence>
<evidence type="ECO:0000269" key="6">
    <source>
    </source>
</evidence>
<evidence type="ECO:0000269" key="7">
    <source>
    </source>
</evidence>
<evidence type="ECO:0000269" key="8">
    <source ref="2"/>
</evidence>
<evidence type="ECO:0000303" key="9">
    <source>
    </source>
</evidence>
<evidence type="ECO:0000303" key="10">
    <source>
    </source>
</evidence>
<evidence type="ECO:0000303" key="11">
    <source ref="2"/>
</evidence>
<evidence type="ECO:0000305" key="12"/>
<evidence type="ECO:0000312" key="13">
    <source>
        <dbReference type="EMBL" id="AAG34121.1"/>
    </source>
</evidence>
<evidence type="ECO:0000312" key="14">
    <source>
        <dbReference type="EMBL" id="AAH17656.1"/>
    </source>
</evidence>
<evidence type="ECO:0000312" key="15">
    <source>
        <dbReference type="EMBL" id="AAH28309.1"/>
    </source>
</evidence>
<evidence type="ECO:0000312" key="16">
    <source>
        <dbReference type="EMBL" id="AAL55689.1"/>
    </source>
</evidence>
<evidence type="ECO:0000312" key="17">
    <source>
        <dbReference type="HGNC" id="HGNC:17055"/>
    </source>
</evidence>
<evidence type="ECO:0007744" key="18">
    <source>
    </source>
</evidence>
<evidence type="ECO:0007744" key="19">
    <source>
    </source>
</evidence>
<evidence type="ECO:0007744" key="20">
    <source>
    </source>
</evidence>
<gene>
    <name evidence="17" type="primary">MLXIP</name>
    <name type="synonym">BHLHE36</name>
    <name type="synonym">KIAA0867</name>
    <name evidence="16" type="synonym">MIR</name>
    <name type="synonym">MONDOA</name>
</gene>
<reference evidence="12 13" key="1">
    <citation type="journal article" date="2000" name="Mol. Cell. Biol.">
        <title>MondoA, a novel basic helix-loop-helix-leucine zipper transcriptional activator that constitutes a positive branch of a max-like network.</title>
        <authorList>
            <person name="Billin A.N."/>
            <person name="Eilers A.L."/>
            <person name="Coulter K.L."/>
            <person name="Logan J.S."/>
            <person name="Ayer D.E."/>
        </authorList>
    </citation>
    <scope>NUCLEOTIDE SEQUENCE [MRNA] (ISOFORM 1)</scope>
    <scope>TISSUE SPECIFICITY</scope>
</reference>
<reference evidence="12 16" key="2">
    <citation type="submission" date="2000-03" db="EMBL/GenBank/DDBJ databases">
        <title>Mir, a new bHLHZip protein interacting with Mlx.</title>
        <authorList>
            <person name="Merla G."/>
            <person name="Cairo S."/>
            <person name="Reymond A."/>
        </authorList>
    </citation>
    <scope>NUCLEOTIDE SEQUENCE [MRNA] (ISOFORMS 2 AND 4)</scope>
    <scope>VARIANT GLY-396</scope>
</reference>
<reference key="3">
    <citation type="journal article" date="1998" name="DNA Res.">
        <title>Prediction of the coding sequences of unidentified human genes. XII. The complete sequences of 100 new cDNA clones from brain which code for large proteins in vitro.</title>
        <authorList>
            <person name="Nagase T."/>
            <person name="Ishikawa K."/>
            <person name="Suyama M."/>
            <person name="Kikuno R."/>
            <person name="Hirosawa M."/>
            <person name="Miyajima N."/>
            <person name="Tanaka A."/>
            <person name="Kotani H."/>
            <person name="Nomura N."/>
            <person name="Ohara O."/>
        </authorList>
    </citation>
    <scope>NUCLEOTIDE SEQUENCE [LARGE SCALE MRNA] (ISOFORM 2)</scope>
    <source>
        <tissue>Brain</tissue>
    </source>
</reference>
<reference evidence="12 15" key="4">
    <citation type="journal article" date="2004" name="Genome Res.">
        <title>The status, quality, and expansion of the NIH full-length cDNA project: the Mammalian Gene Collection (MGC).</title>
        <authorList>
            <consortium name="The MGC Project Team"/>
        </authorList>
    </citation>
    <scope>NUCLEOTIDE SEQUENCE [LARGE SCALE MRNA] (ISOFORMS 1 AND 5)</scope>
    <scope>NUCLEOTIDE SEQUENCE [LARGE SCALE MRNA] OF 176-919 (ISOFORM 3)</scope>
    <scope>VARIANT GLY-396</scope>
    <source>
        <tissue evidence="14">Pancreas</tissue>
        <tissue evidence="15">Placenta</tissue>
    </source>
</reference>
<reference evidence="12" key="5">
    <citation type="journal article" date="2002" name="Mol. Cell. Biol.">
        <title>A novel heterodimerization domain, CRM1, and 14-3-3 control subcellular localization of the MondoA-Mlx heterocomplex.</title>
        <authorList>
            <person name="Eilers A.L."/>
            <person name="Sundwall E."/>
            <person name="Lin M."/>
            <person name="Sullivan A.A."/>
            <person name="Ayer D.E."/>
        </authorList>
    </citation>
    <scope>FUNCTION</scope>
    <scope>DNA-BINDING</scope>
    <scope>INTERACTION WITH MLX</scope>
    <scope>SUBCELLULAR LOCATION</scope>
</reference>
<reference evidence="12" key="6">
    <citation type="journal article" date="2006" name="Mol. Cell. Biol.">
        <title>MondoA-Mlx heterodimers are candidate sensors of cellular energy status: mitochondrial localization and direct regulation of glycolysis.</title>
        <authorList>
            <person name="Sans C.L."/>
            <person name="Satterwhite D.J."/>
            <person name="Stoltzman C.A."/>
            <person name="Breen K.T."/>
            <person name="Ayer D.E."/>
        </authorList>
    </citation>
    <scope>FUNCTION</scope>
    <scope>SUBCELLULAR LOCATION</scope>
</reference>
<reference key="7">
    <citation type="journal article" date="2008" name="Proc. Natl. Acad. Sci. U.S.A.">
        <title>A quantitative atlas of mitotic phosphorylation.</title>
        <authorList>
            <person name="Dephoure N."/>
            <person name="Zhou C."/>
            <person name="Villen J."/>
            <person name="Beausoleil S.A."/>
            <person name="Bakalarski C.E."/>
            <person name="Elledge S.J."/>
            <person name="Gygi S.P."/>
        </authorList>
    </citation>
    <scope>PHOSPHORYLATION [LARGE SCALE ANALYSIS] AT SER-27 AND SER-33</scope>
    <scope>IDENTIFICATION BY MASS SPECTROMETRY [LARGE SCALE ANALYSIS]</scope>
    <source>
        <tissue>Cervix carcinoma</tissue>
    </source>
</reference>
<reference key="8">
    <citation type="journal article" date="2009" name="Anal. Chem.">
        <title>Lys-N and trypsin cover complementary parts of the phosphoproteome in a refined SCX-based approach.</title>
        <authorList>
            <person name="Gauci S."/>
            <person name="Helbig A.O."/>
            <person name="Slijper M."/>
            <person name="Krijgsveld J."/>
            <person name="Heck A.J."/>
            <person name="Mohammed S."/>
        </authorList>
    </citation>
    <scope>IDENTIFICATION BY MASS SPECTROMETRY [LARGE SCALE ANALYSIS]</scope>
</reference>
<reference key="9">
    <citation type="journal article" date="2012" name="Proc. Natl. Acad. Sci. U.S.A.">
        <title>N-terminal acetylome analyses and functional insights of the N-terminal acetyltransferase NatB.</title>
        <authorList>
            <person name="Van Damme P."/>
            <person name="Lasa M."/>
            <person name="Polevoda B."/>
            <person name="Gazquez C."/>
            <person name="Elosegui-Artola A."/>
            <person name="Kim D.S."/>
            <person name="De Juan-Pardo E."/>
            <person name="Demeyer K."/>
            <person name="Hole K."/>
            <person name="Larrea E."/>
            <person name="Timmerman E."/>
            <person name="Prieto J."/>
            <person name="Arnesen T."/>
            <person name="Sherman F."/>
            <person name="Gevaert K."/>
            <person name="Aldabe R."/>
        </authorList>
    </citation>
    <scope>ACETYLATION [LARGE SCALE ANALYSIS] AT ALA-2</scope>
    <scope>CLEAVAGE OF INITIATOR METHIONINE [LARGE SCALE ANALYSIS]</scope>
    <scope>IDENTIFICATION BY MASS SPECTROMETRY [LARGE SCALE ANALYSIS]</scope>
</reference>
<reference key="10">
    <citation type="journal article" date="2013" name="J. Proteome Res.">
        <title>Toward a comprehensive characterization of a human cancer cell phosphoproteome.</title>
        <authorList>
            <person name="Zhou H."/>
            <person name="Di Palma S."/>
            <person name="Preisinger C."/>
            <person name="Peng M."/>
            <person name="Polat A.N."/>
            <person name="Heck A.J."/>
            <person name="Mohammed S."/>
        </authorList>
    </citation>
    <scope>PHOSPHORYLATION [LARGE SCALE ANALYSIS] AT SER-9 AND SER-669</scope>
    <scope>IDENTIFICATION BY MASS SPECTROMETRY [LARGE SCALE ANALYSIS]</scope>
    <source>
        <tissue>Erythroleukemia</tissue>
    </source>
</reference>
<comment type="function">
    <text evidence="1 5 7">Binds DNA as a heterodimer with MLX and activates transcription. Binds to the canonical E box sequence 5'-CACGTG-3'. Plays a role in transcriptional activation of glycolytic target genes. Involved in glucose-responsive gene regulation.</text>
</comment>
<comment type="subunit">
    <text evidence="1 5">Efficient DNA binding requires dimerization with another bHLH protein. Binds DNA as a homodimer or a heterodimer with MLX.</text>
</comment>
<comment type="subcellular location">
    <subcellularLocation>
        <location evidence="5 7">Cytoplasm</location>
    </subcellularLocation>
    <subcellularLocation>
        <location evidence="2 5 7">Nucleus</location>
    </subcellularLocation>
    <subcellularLocation>
        <location evidence="5 7">Mitochondrion outer membrane</location>
    </subcellularLocation>
    <text evidence="1 5 7">Predominantly cytoplasmic but shuttles between cytoplasm and nucleus when associated with MLX. Also associates with the outer mitochondrial membrane and may shuttle between the outer mitochondrial membrane and the nucleus.</text>
</comment>
<comment type="alternative products">
    <event type="alternative splicing"/>
    <isoform>
        <id>Q9HAP2-1</id>
        <name evidence="4">1</name>
        <sequence type="displayed"/>
    </isoform>
    <isoform>
        <id>Q9HAP2-2</id>
        <name evidence="8">2</name>
        <sequence type="described" ref="VSP_052499"/>
    </isoform>
    <isoform>
        <id>Q9HAP2-3</id>
        <name evidence="6">3</name>
        <sequence type="described" ref="VSP_052501 VSP_052502"/>
    </isoform>
    <isoform>
        <id>Q9HAP2-4</id>
        <name evidence="8">4</name>
        <sequence type="described" ref="VSP_052499 VSP_052503 VSP_052504"/>
    </isoform>
    <isoform>
        <id>Q9HAP2-5</id>
        <name evidence="6">5</name>
        <sequence type="described" ref="VSP_052499 VSP_052500 VSP_052501 VSP_052502"/>
    </isoform>
</comment>
<comment type="tissue specificity">
    <text evidence="4">Widely expressed in adult tissues. Most abundant in skeletal muscle.</text>
</comment>
<comment type="sequence caution" evidence="12">
    <conflict type="erroneous initiation">
        <sequence resource="EMBL-CDS" id="BAA74890"/>
    </conflict>
</comment>
<accession>Q9HAP2</accession>
<accession>A7MBN0</accession>
<accession>O94945</accession>
<accession>Q7LC47</accession>
<accession>Q8IXP1</accession>
<accession>Q8TAH9</accession>
<accession>Q8WVQ0</accession>
<accession>Q8WYA5</accession>
<sequence length="919" mass="101185">MAADVFMCSPRRPRSRGRQVLLKPQVSEDDDDSDTDEPSPPPASGAATPARAHASAAPPPPRAGPGREEPPRRQQIIHSGHFMVSSPHREHPPKKGYDFDTVNKQTCQTYSFGKTSSCHLSIDASLTKLFECMTLAYSGKLVSPKWKNFKGLKLQWRDKIRLNNAIWRAWYMQYLEKRKNPVCHFVTPLDGSVDVDEHRRPEAITTEGKYWKSRIEIVIREYHKWRTYFKKRLQQHKDEDLSSLVQDDDMLYWHKHGDGWKTPVPMEEDPLLDTDMLMSEFSDTLFSTLSSHQPVAWPNPREIAHLGNADMIQPGLIPLQPNLDFMDTFEPFQDLFSSSRSIFGSMLPASASAPVPDPNNPPAQESILPTTALPTVSLPDSLIAPPTAPSLAHMDEQGCEHTSRTEDPFIQPTDFGPSEPPLSVPQPFLPVFTMPLLSPSPAPPPISPVLPLVPPPATALNPPAPPTFHQPQKFAGVNKAPSVITHTASATLTHDAPATTFSQSQGLVITTHHPAPSAAPCGLALSPVTRPPQPRLTFVHPKPVSLTGGRPKQPHKIVPAPKPEPVSLVLKNARIAPAAFSGQPQAVIMTSGPLKREGMLASTVSQSNVVIAPAAIARAPGVPEFHSSILVTDLGHGTSSPPAPVSRLFPSTAQDPLGKGEQVPLHGGSPQVTVTGPSRDCPNSGQASPCASEQSPSPQSPQNNCSGKSDPKNVAALKNRQMKHISAEQKRRFNIKMCFDMLNSLISNNSKLTSHAITLQKTVEYITKLQQERGQMQEEARRLREEIEELNATIISCQQLLPATGVPVTRRQFDHMKDMFDEYVKTRTLQNWKFWIFSIIIKPLFESFKGMVSTSSLEELHRTALSWLDQHCSLPILRPMVLSTLRQLSTSTSILTDPAQLPEQASKAVTRIGKRLGES</sequence>
<dbReference type="EMBL" id="AF312918">
    <property type="protein sequence ID" value="AAG34121.1"/>
    <property type="molecule type" value="mRNA"/>
</dbReference>
<dbReference type="EMBL" id="AF245480">
    <property type="protein sequence ID" value="AAL55689.1"/>
    <property type="molecule type" value="mRNA"/>
</dbReference>
<dbReference type="EMBL" id="AF245481">
    <property type="protein sequence ID" value="AAL55690.1"/>
    <property type="molecule type" value="mRNA"/>
</dbReference>
<dbReference type="EMBL" id="AB020674">
    <property type="protein sequence ID" value="BAA74890.2"/>
    <property type="status" value="ALT_INIT"/>
    <property type="molecule type" value="mRNA"/>
</dbReference>
<dbReference type="EMBL" id="BC017656">
    <property type="protein sequence ID" value="AAH17656.1"/>
    <property type="molecule type" value="mRNA"/>
</dbReference>
<dbReference type="EMBL" id="BC028309">
    <property type="protein sequence ID" value="AAH28309.1"/>
    <property type="molecule type" value="mRNA"/>
</dbReference>
<dbReference type="EMBL" id="BC039704">
    <property type="protein sequence ID" value="AAH39704.1"/>
    <property type="molecule type" value="mRNA"/>
</dbReference>
<dbReference type="EMBL" id="BC151841">
    <property type="protein sequence ID" value="AAI51842.1"/>
    <property type="molecule type" value="mRNA"/>
</dbReference>
<dbReference type="CCDS" id="CCDS73540.1">
    <molecule id="Q9HAP2-1"/>
</dbReference>
<dbReference type="RefSeq" id="NP_055753.3">
    <molecule id="Q9HAP2-1"/>
    <property type="nucleotide sequence ID" value="NM_014938.5"/>
</dbReference>
<dbReference type="SMR" id="Q9HAP2"/>
<dbReference type="BioGRID" id="116544">
    <property type="interactions" value="20"/>
</dbReference>
<dbReference type="ComplexPortal" id="CPX-2525">
    <property type="entry name" value="MLXIP-MLX transcription factor complex"/>
</dbReference>
<dbReference type="FunCoup" id="Q9HAP2">
    <property type="interactions" value="1743"/>
</dbReference>
<dbReference type="IntAct" id="Q9HAP2">
    <property type="interactions" value="21"/>
</dbReference>
<dbReference type="STRING" id="9606.ENSP00000312834"/>
<dbReference type="GlyCosmos" id="Q9HAP2">
    <property type="glycosylation" value="8 sites, 2 glycans"/>
</dbReference>
<dbReference type="GlyGen" id="Q9HAP2">
    <property type="glycosylation" value="11 sites, 2 O-linked glycans (10 sites)"/>
</dbReference>
<dbReference type="iPTMnet" id="Q9HAP2"/>
<dbReference type="PhosphoSitePlus" id="Q9HAP2"/>
<dbReference type="BioMuta" id="MLXIP"/>
<dbReference type="DMDM" id="156632588"/>
<dbReference type="jPOST" id="Q9HAP2"/>
<dbReference type="MassIVE" id="Q9HAP2"/>
<dbReference type="PaxDb" id="9606-ENSP00000312834"/>
<dbReference type="PeptideAtlas" id="Q9HAP2"/>
<dbReference type="ProteomicsDB" id="81411">
    <molecule id="Q9HAP2-1"/>
</dbReference>
<dbReference type="ProteomicsDB" id="81412">
    <molecule id="Q9HAP2-2"/>
</dbReference>
<dbReference type="ProteomicsDB" id="81413">
    <molecule id="Q9HAP2-3"/>
</dbReference>
<dbReference type="ProteomicsDB" id="81414">
    <molecule id="Q9HAP2-4"/>
</dbReference>
<dbReference type="ProteomicsDB" id="81415">
    <molecule id="Q9HAP2-5"/>
</dbReference>
<dbReference type="Pumba" id="Q9HAP2"/>
<dbReference type="Antibodypedia" id="9815">
    <property type="antibodies" value="151 antibodies from 26 providers"/>
</dbReference>
<dbReference type="DNASU" id="22877"/>
<dbReference type="Ensembl" id="ENST00000319080.12">
    <molecule id="Q9HAP2-1"/>
    <property type="protein sequence ID" value="ENSP00000312834.6"/>
    <property type="gene ID" value="ENSG00000175727.15"/>
</dbReference>
<dbReference type="Ensembl" id="ENST00000538698.5">
    <molecule id="Q9HAP2-2"/>
    <property type="protein sequence ID" value="ENSP00000440769.1"/>
    <property type="gene ID" value="ENSG00000175727.15"/>
</dbReference>
<dbReference type="Ensembl" id="ENST00000625732.3">
    <molecule id="Q9HAP2-1"/>
    <property type="protein sequence ID" value="ENSP00000486569.2"/>
    <property type="gene ID" value="ENSG00000281178.4"/>
</dbReference>
<dbReference type="Ensembl" id="ENST00000629738.4">
    <molecule id="Q9HAP2-1"/>
    <property type="protein sequence ID" value="ENSP00000487003.1"/>
    <property type="gene ID" value="ENSG00000281178.4"/>
</dbReference>
<dbReference type="GeneID" id="22877"/>
<dbReference type="KEGG" id="hsa:22877"/>
<dbReference type="MANE-Select" id="ENST00000319080.12">
    <property type="protein sequence ID" value="ENSP00000312834.6"/>
    <property type="RefSeq nucleotide sequence ID" value="NM_014938.6"/>
    <property type="RefSeq protein sequence ID" value="NP_055753.3"/>
</dbReference>
<dbReference type="UCSC" id="uc001ubq.4">
    <molecule id="Q9HAP2-1"/>
    <property type="organism name" value="human"/>
</dbReference>
<dbReference type="AGR" id="HGNC:17055"/>
<dbReference type="CTD" id="22877"/>
<dbReference type="DisGeNET" id="22877"/>
<dbReference type="GeneCards" id="MLXIP"/>
<dbReference type="HGNC" id="HGNC:17055">
    <property type="gene designation" value="MLXIP"/>
</dbReference>
<dbReference type="HPA" id="ENSG00000175727">
    <property type="expression patterns" value="Tissue enhanced (skeletal)"/>
</dbReference>
<dbReference type="MIM" id="608090">
    <property type="type" value="gene"/>
</dbReference>
<dbReference type="neXtProt" id="NX_Q9HAP2"/>
<dbReference type="OpenTargets" id="ENSG00000175727"/>
<dbReference type="PharmGKB" id="PA128394590"/>
<dbReference type="VEuPathDB" id="HostDB:ENSG00000175727"/>
<dbReference type="eggNOG" id="KOG3582">
    <property type="taxonomic scope" value="Eukaryota"/>
</dbReference>
<dbReference type="GeneTree" id="ENSGT00940000158691"/>
<dbReference type="HOGENOM" id="CLU_007471_1_0_1"/>
<dbReference type="InParanoid" id="Q9HAP2"/>
<dbReference type="OMA" id="TEFHSSI"/>
<dbReference type="OrthoDB" id="6022628at2759"/>
<dbReference type="PAN-GO" id="Q9HAP2">
    <property type="GO annotations" value="4 GO annotations based on evolutionary models"/>
</dbReference>
<dbReference type="PhylomeDB" id="Q9HAP2"/>
<dbReference type="TreeFam" id="TF324749"/>
<dbReference type="PathwayCommons" id="Q9HAP2"/>
<dbReference type="SignaLink" id="Q9HAP2"/>
<dbReference type="BioGRID-ORCS" id="22877">
    <property type="hits" value="29 hits in 417 CRISPR screens"/>
</dbReference>
<dbReference type="ChiTaRS" id="MLXIP">
    <property type="organism name" value="human"/>
</dbReference>
<dbReference type="GenomeRNAi" id="22877"/>
<dbReference type="Pharos" id="Q9HAP2">
    <property type="development level" value="Tbio"/>
</dbReference>
<dbReference type="PRO" id="PR:Q9HAP2"/>
<dbReference type="Proteomes" id="UP000005640">
    <property type="component" value="Chromosome 12"/>
</dbReference>
<dbReference type="RNAct" id="Q9HAP2">
    <property type="molecule type" value="protein"/>
</dbReference>
<dbReference type="Bgee" id="ENSG00000175727">
    <property type="expression patterns" value="Expressed in ileal mucosa and 175 other cell types or tissues"/>
</dbReference>
<dbReference type="ExpressionAtlas" id="Q9HAP2">
    <property type="expression patterns" value="baseline and differential"/>
</dbReference>
<dbReference type="GO" id="GO:0000785">
    <property type="term" value="C:chromatin"/>
    <property type="evidence" value="ECO:0000247"/>
    <property type="project" value="NTNU_SB"/>
</dbReference>
<dbReference type="GO" id="GO:0005741">
    <property type="term" value="C:mitochondrial outer membrane"/>
    <property type="evidence" value="ECO:0007669"/>
    <property type="project" value="UniProtKB-SubCell"/>
</dbReference>
<dbReference type="GO" id="GO:0005634">
    <property type="term" value="C:nucleus"/>
    <property type="evidence" value="ECO:0000318"/>
    <property type="project" value="GO_Central"/>
</dbReference>
<dbReference type="GO" id="GO:0001228">
    <property type="term" value="F:DNA-binding transcription activator activity, RNA polymerase II-specific"/>
    <property type="evidence" value="ECO:0000314"/>
    <property type="project" value="NTNU_SB"/>
</dbReference>
<dbReference type="GO" id="GO:0000981">
    <property type="term" value="F:DNA-binding transcription factor activity, RNA polymerase II-specific"/>
    <property type="evidence" value="ECO:0000247"/>
    <property type="project" value="NTNU_SB"/>
</dbReference>
<dbReference type="GO" id="GO:0046983">
    <property type="term" value="F:protein dimerization activity"/>
    <property type="evidence" value="ECO:0007669"/>
    <property type="project" value="InterPro"/>
</dbReference>
<dbReference type="GO" id="GO:0000978">
    <property type="term" value="F:RNA polymerase II cis-regulatory region sequence-specific DNA binding"/>
    <property type="evidence" value="ECO:0000318"/>
    <property type="project" value="GO_Central"/>
</dbReference>
<dbReference type="GO" id="GO:0000977">
    <property type="term" value="F:RNA polymerase II transcription regulatory region sequence-specific DNA binding"/>
    <property type="evidence" value="ECO:0000314"/>
    <property type="project" value="NTNU_SB"/>
</dbReference>
<dbReference type="GO" id="GO:0045944">
    <property type="term" value="P:positive regulation of transcription by RNA polymerase II"/>
    <property type="evidence" value="ECO:0000314"/>
    <property type="project" value="NTNU_SB"/>
</dbReference>
<dbReference type="GO" id="GO:0006357">
    <property type="term" value="P:regulation of transcription by RNA polymerase II"/>
    <property type="evidence" value="ECO:0000318"/>
    <property type="project" value="GO_Central"/>
</dbReference>
<dbReference type="CDD" id="cd19688">
    <property type="entry name" value="bHLHzip_MLXIP"/>
    <property type="match status" value="1"/>
</dbReference>
<dbReference type="CDD" id="cd21772">
    <property type="entry name" value="NES2-NLS_MLXIP"/>
    <property type="match status" value="1"/>
</dbReference>
<dbReference type="FunFam" id="4.10.280.10:FF:000028">
    <property type="entry name" value="MLX interacting protein like"/>
    <property type="match status" value="1"/>
</dbReference>
<dbReference type="Gene3D" id="4.10.280.10">
    <property type="entry name" value="Helix-loop-helix DNA-binding domain"/>
    <property type="match status" value="1"/>
</dbReference>
<dbReference type="InterPro" id="IPR011598">
    <property type="entry name" value="bHLH_dom"/>
</dbReference>
<dbReference type="InterPro" id="IPR036638">
    <property type="entry name" value="HLH_DNA-bd_sf"/>
</dbReference>
<dbReference type="InterPro" id="IPR052207">
    <property type="entry name" value="Max-like/E-box_TFs"/>
</dbReference>
<dbReference type="PANTHER" id="PTHR15741">
    <property type="entry name" value="BASIC HELIX-LOOP-HELIX ZIP TRANSCRIPTION FACTOR"/>
    <property type="match status" value="1"/>
</dbReference>
<dbReference type="PANTHER" id="PTHR15741:SF23">
    <property type="entry name" value="MLX-INTERACTING PROTEIN"/>
    <property type="match status" value="1"/>
</dbReference>
<dbReference type="Pfam" id="PF00010">
    <property type="entry name" value="HLH"/>
    <property type="match status" value="1"/>
</dbReference>
<dbReference type="SMART" id="SM00353">
    <property type="entry name" value="HLH"/>
    <property type="match status" value="1"/>
</dbReference>
<dbReference type="SUPFAM" id="SSF47459">
    <property type="entry name" value="HLH, helix-loop-helix DNA-binding domain"/>
    <property type="match status" value="1"/>
</dbReference>
<dbReference type="PROSITE" id="PS50888">
    <property type="entry name" value="BHLH"/>
    <property type="match status" value="1"/>
</dbReference>
<proteinExistence type="evidence at protein level"/>
<keyword id="KW-0007">Acetylation</keyword>
<keyword id="KW-0010">Activator</keyword>
<keyword id="KW-0025">Alternative splicing</keyword>
<keyword id="KW-0963">Cytoplasm</keyword>
<keyword id="KW-0238">DNA-binding</keyword>
<keyword id="KW-0472">Membrane</keyword>
<keyword id="KW-0496">Mitochondrion</keyword>
<keyword id="KW-1000">Mitochondrion outer membrane</keyword>
<keyword id="KW-0539">Nucleus</keyword>
<keyword id="KW-0597">Phosphoprotein</keyword>
<keyword id="KW-1267">Proteomics identification</keyword>
<keyword id="KW-1185">Reference proteome</keyword>
<keyword id="KW-0804">Transcription</keyword>
<keyword id="KW-0805">Transcription regulation</keyword>
<protein>
    <recommendedName>
        <fullName>MLX-interacting protein</fullName>
    </recommendedName>
    <alternativeName>
        <fullName>Class E basic helix-loop-helix protein 36</fullName>
        <shortName>bHLHe36</shortName>
    </alternativeName>
    <alternativeName>
        <fullName>Transcriptional activator MondoA</fullName>
    </alternativeName>
</protein>
<organism>
    <name type="scientific">Homo sapiens</name>
    <name type="common">Human</name>
    <dbReference type="NCBI Taxonomy" id="9606"/>
    <lineage>
        <taxon>Eukaryota</taxon>
        <taxon>Metazoa</taxon>
        <taxon>Chordata</taxon>
        <taxon>Craniata</taxon>
        <taxon>Vertebrata</taxon>
        <taxon>Euteleostomi</taxon>
        <taxon>Mammalia</taxon>
        <taxon>Eutheria</taxon>
        <taxon>Euarchontoglires</taxon>
        <taxon>Primates</taxon>
        <taxon>Haplorrhini</taxon>
        <taxon>Catarrhini</taxon>
        <taxon>Hominidae</taxon>
        <taxon>Homo</taxon>
    </lineage>
</organism>
<name>MLXIP_HUMAN</name>